<protein>
    <recommendedName>
        <fullName evidence="1">Fumarate hydratase class II</fullName>
        <shortName evidence="1">Fumarase C</shortName>
        <ecNumber evidence="1">4.2.1.2</ecNumber>
    </recommendedName>
    <alternativeName>
        <fullName evidence="1">Aerobic fumarase</fullName>
    </alternativeName>
    <alternativeName>
        <fullName evidence="1">Iron-independent fumarase</fullName>
    </alternativeName>
</protein>
<accession>Q4L7F5</accession>
<gene>
    <name evidence="1" type="primary">fumC</name>
    <name type="ordered locus">SH1111</name>
</gene>
<reference key="1">
    <citation type="journal article" date="2005" name="J. Bacteriol.">
        <title>Whole-genome sequencing of Staphylococcus haemolyticus uncovers the extreme plasticity of its genome and the evolution of human-colonizing staphylococcal species.</title>
        <authorList>
            <person name="Takeuchi F."/>
            <person name="Watanabe S."/>
            <person name="Baba T."/>
            <person name="Yuzawa H."/>
            <person name="Ito T."/>
            <person name="Morimoto Y."/>
            <person name="Kuroda M."/>
            <person name="Cui L."/>
            <person name="Takahashi M."/>
            <person name="Ankai A."/>
            <person name="Baba S."/>
            <person name="Fukui S."/>
            <person name="Lee J.C."/>
            <person name="Hiramatsu K."/>
        </authorList>
    </citation>
    <scope>NUCLEOTIDE SEQUENCE [LARGE SCALE GENOMIC DNA]</scope>
    <source>
        <strain>JCSC1435</strain>
    </source>
</reference>
<keyword id="KW-0963">Cytoplasm</keyword>
<keyword id="KW-0456">Lyase</keyword>
<keyword id="KW-0816">Tricarboxylic acid cycle</keyword>
<feature type="chain" id="PRO_0000161319" description="Fumarate hydratase class II">
    <location>
        <begin position="1"/>
        <end position="461"/>
    </location>
</feature>
<feature type="active site" description="Proton donor/acceptor" evidence="1">
    <location>
        <position position="186"/>
    </location>
</feature>
<feature type="active site" evidence="1">
    <location>
        <position position="316"/>
    </location>
</feature>
<feature type="binding site" evidence="1">
    <location>
        <begin position="97"/>
        <end position="99"/>
    </location>
    <ligand>
        <name>substrate</name>
    </ligand>
</feature>
<feature type="binding site" description="in site B" evidence="1">
    <location>
        <begin position="127"/>
        <end position="130"/>
    </location>
    <ligand>
        <name>substrate</name>
    </ligand>
</feature>
<feature type="binding site" evidence="1">
    <location>
        <begin position="137"/>
        <end position="139"/>
    </location>
    <ligand>
        <name>substrate</name>
    </ligand>
</feature>
<feature type="binding site" evidence="1">
    <location>
        <position position="185"/>
    </location>
    <ligand>
        <name>substrate</name>
    </ligand>
</feature>
<feature type="binding site" evidence="1">
    <location>
        <position position="317"/>
    </location>
    <ligand>
        <name>substrate</name>
    </ligand>
</feature>
<feature type="binding site" evidence="1">
    <location>
        <begin position="322"/>
        <end position="324"/>
    </location>
    <ligand>
        <name>substrate</name>
    </ligand>
</feature>
<feature type="site" description="Important for catalytic activity" evidence="1">
    <location>
        <position position="329"/>
    </location>
</feature>
<proteinExistence type="inferred from homology"/>
<dbReference type="EC" id="4.2.1.2" evidence="1"/>
<dbReference type="EMBL" id="AP006716">
    <property type="protein sequence ID" value="BAE04420.1"/>
    <property type="molecule type" value="Genomic_DNA"/>
</dbReference>
<dbReference type="RefSeq" id="WP_011275412.1">
    <property type="nucleotide sequence ID" value="NC_007168.1"/>
</dbReference>
<dbReference type="SMR" id="Q4L7F5"/>
<dbReference type="GeneID" id="93780516"/>
<dbReference type="KEGG" id="sha:SH1111"/>
<dbReference type="eggNOG" id="COG0114">
    <property type="taxonomic scope" value="Bacteria"/>
</dbReference>
<dbReference type="HOGENOM" id="CLU_021594_4_1_9"/>
<dbReference type="OrthoDB" id="9802809at2"/>
<dbReference type="UniPathway" id="UPA00223">
    <property type="reaction ID" value="UER01007"/>
</dbReference>
<dbReference type="Proteomes" id="UP000000543">
    <property type="component" value="Chromosome"/>
</dbReference>
<dbReference type="GO" id="GO:0005737">
    <property type="term" value="C:cytoplasm"/>
    <property type="evidence" value="ECO:0007669"/>
    <property type="project" value="UniProtKB-SubCell"/>
</dbReference>
<dbReference type="GO" id="GO:0004333">
    <property type="term" value="F:fumarate hydratase activity"/>
    <property type="evidence" value="ECO:0007669"/>
    <property type="project" value="UniProtKB-UniRule"/>
</dbReference>
<dbReference type="GO" id="GO:0006106">
    <property type="term" value="P:fumarate metabolic process"/>
    <property type="evidence" value="ECO:0007669"/>
    <property type="project" value="InterPro"/>
</dbReference>
<dbReference type="GO" id="GO:0006108">
    <property type="term" value="P:malate metabolic process"/>
    <property type="evidence" value="ECO:0007669"/>
    <property type="project" value="TreeGrafter"/>
</dbReference>
<dbReference type="GO" id="GO:0006099">
    <property type="term" value="P:tricarboxylic acid cycle"/>
    <property type="evidence" value="ECO:0007669"/>
    <property type="project" value="UniProtKB-UniRule"/>
</dbReference>
<dbReference type="CDD" id="cd01362">
    <property type="entry name" value="Fumarase_classII"/>
    <property type="match status" value="1"/>
</dbReference>
<dbReference type="FunFam" id="1.10.40.30:FF:000002">
    <property type="entry name" value="Fumarate hydratase class II"/>
    <property type="match status" value="1"/>
</dbReference>
<dbReference type="FunFam" id="1.10.275.10:FF:000001">
    <property type="entry name" value="Fumarate hydratase, mitochondrial"/>
    <property type="match status" value="1"/>
</dbReference>
<dbReference type="FunFam" id="1.20.200.10:FF:000001">
    <property type="entry name" value="Fumarate hydratase, mitochondrial"/>
    <property type="match status" value="1"/>
</dbReference>
<dbReference type="Gene3D" id="1.10.40.30">
    <property type="entry name" value="Fumarase/aspartase (C-terminal domain)"/>
    <property type="match status" value="1"/>
</dbReference>
<dbReference type="Gene3D" id="1.20.200.10">
    <property type="entry name" value="Fumarase/aspartase (Central domain)"/>
    <property type="match status" value="1"/>
</dbReference>
<dbReference type="Gene3D" id="1.10.275.10">
    <property type="entry name" value="Fumarase/aspartase (N-terminal domain)"/>
    <property type="match status" value="1"/>
</dbReference>
<dbReference type="HAMAP" id="MF_00743">
    <property type="entry name" value="FumaraseC"/>
    <property type="match status" value="1"/>
</dbReference>
<dbReference type="InterPro" id="IPR005677">
    <property type="entry name" value="Fum_hydII"/>
</dbReference>
<dbReference type="InterPro" id="IPR024083">
    <property type="entry name" value="Fumarase/histidase_N"/>
</dbReference>
<dbReference type="InterPro" id="IPR018951">
    <property type="entry name" value="Fumarase_C_C"/>
</dbReference>
<dbReference type="InterPro" id="IPR020557">
    <property type="entry name" value="Fumarate_lyase_CS"/>
</dbReference>
<dbReference type="InterPro" id="IPR000362">
    <property type="entry name" value="Fumarate_lyase_fam"/>
</dbReference>
<dbReference type="InterPro" id="IPR022761">
    <property type="entry name" value="Fumarate_lyase_N"/>
</dbReference>
<dbReference type="InterPro" id="IPR008948">
    <property type="entry name" value="L-Aspartase-like"/>
</dbReference>
<dbReference type="NCBIfam" id="TIGR00979">
    <property type="entry name" value="fumC_II"/>
    <property type="match status" value="1"/>
</dbReference>
<dbReference type="NCBIfam" id="NF008909">
    <property type="entry name" value="PRK12273.1"/>
    <property type="match status" value="1"/>
</dbReference>
<dbReference type="PANTHER" id="PTHR11444">
    <property type="entry name" value="ASPARTATEAMMONIA/ARGININOSUCCINATE/ADENYLOSUCCINATE LYASE"/>
    <property type="match status" value="1"/>
</dbReference>
<dbReference type="PANTHER" id="PTHR11444:SF1">
    <property type="entry name" value="FUMARATE HYDRATASE, MITOCHONDRIAL"/>
    <property type="match status" value="1"/>
</dbReference>
<dbReference type="Pfam" id="PF10415">
    <property type="entry name" value="FumaraseC_C"/>
    <property type="match status" value="1"/>
</dbReference>
<dbReference type="Pfam" id="PF00206">
    <property type="entry name" value="Lyase_1"/>
    <property type="match status" value="1"/>
</dbReference>
<dbReference type="PRINTS" id="PR00145">
    <property type="entry name" value="ARGSUCLYASE"/>
</dbReference>
<dbReference type="PRINTS" id="PR00149">
    <property type="entry name" value="FUMRATELYASE"/>
</dbReference>
<dbReference type="SUPFAM" id="SSF48557">
    <property type="entry name" value="L-aspartase-like"/>
    <property type="match status" value="1"/>
</dbReference>
<dbReference type="PROSITE" id="PS00163">
    <property type="entry name" value="FUMARATE_LYASES"/>
    <property type="match status" value="1"/>
</dbReference>
<evidence type="ECO:0000255" key="1">
    <source>
        <dbReference type="HAMAP-Rule" id="MF_00743"/>
    </source>
</evidence>
<comment type="function">
    <text evidence="1">Involved in the TCA cycle. Catalyzes the stereospecific interconversion of fumarate to L-malate.</text>
</comment>
<comment type="catalytic activity">
    <reaction evidence="1">
        <text>(S)-malate = fumarate + H2O</text>
        <dbReference type="Rhea" id="RHEA:12460"/>
        <dbReference type="ChEBI" id="CHEBI:15377"/>
        <dbReference type="ChEBI" id="CHEBI:15589"/>
        <dbReference type="ChEBI" id="CHEBI:29806"/>
        <dbReference type="EC" id="4.2.1.2"/>
    </reaction>
</comment>
<comment type="pathway">
    <text evidence="1">Carbohydrate metabolism; tricarboxylic acid cycle; (S)-malate from fumarate: step 1/1.</text>
</comment>
<comment type="subunit">
    <text evidence="1">Homotetramer.</text>
</comment>
<comment type="subcellular location">
    <subcellularLocation>
        <location evidence="1">Cytoplasm</location>
    </subcellularLocation>
</comment>
<comment type="miscellaneous">
    <text evidence="1">There are 2 substrate-binding sites: the catalytic A site, and the non-catalytic B site that may play a role in the transfer of substrate or product between the active site and the solvent. Alternatively, the B site may bind allosteric effectors.</text>
</comment>
<comment type="similarity">
    <text evidence="1">Belongs to the class-II fumarase/aspartase family. Fumarase subfamily.</text>
</comment>
<name>FUMC_STAHJ</name>
<organism>
    <name type="scientific">Staphylococcus haemolyticus (strain JCSC1435)</name>
    <dbReference type="NCBI Taxonomy" id="279808"/>
    <lineage>
        <taxon>Bacteria</taxon>
        <taxon>Bacillati</taxon>
        <taxon>Bacillota</taxon>
        <taxon>Bacilli</taxon>
        <taxon>Bacillales</taxon>
        <taxon>Staphylococcaceae</taxon>
        <taxon>Staphylococcus</taxon>
    </lineage>
</organism>
<sequence>MSVRIEHDTFGEIEVPGDKYWGAQTERSKRNFPVGKERMPIEVVYGFAQLKRGAALANHELGKLSDAKKDAIVYACDLILKGELDEHFPLVVWQTGSGTQSNMNVNEVVSFVANKYLKEQGIDESIHPNDDVNKSQSSNDTFPTAMHVALYHEVETKLEPALKHLRDTFKEKEDKYQSIIKIGRTHLQDATPIKLGQEISGWRYMLDKCEELLAESKKHILSLAIGGTAVGTGINAHPEFGNKVAKFISENTGYNFVSSENKFHALTSHDEVVQLHGTLKALAADLMKIANDIRWLASGPRAGLAEISIPENEPGSSIMPGKVNPTQCEMLTMVAVQVMGNDTTVGIASSQGNFELNVFKPVILHNTLQSIYLLADGMQTFNDNCAVGIEPIEENINNYLNQSLMLVTALNPHIGYEKAAQIAKKAHKEGLTLKESAIQSGHVTEEQFEEWIKPEDMVDPH</sequence>